<comment type="function">
    <text evidence="1">Binds to 23S rRNA.</text>
</comment>
<comment type="subunit">
    <text evidence="1">Part of the 50S ribosomal subunit.</text>
</comment>
<comment type="subcellular location">
    <subcellularLocation>
        <location>Plastid</location>
        <location>Chloroplast</location>
    </subcellularLocation>
</comment>
<comment type="similarity">
    <text evidence="2">Belongs to the universal ribosomal protein uL23 family.</text>
</comment>
<accession>Q0PUX7</accession>
<gene>
    <name type="primary">rpl23</name>
</gene>
<name>RK23_FRAAN</name>
<protein>
    <recommendedName>
        <fullName evidence="2">Large ribosomal subunit protein uL23c</fullName>
    </recommendedName>
    <alternativeName>
        <fullName>50S ribosomal protein L23, chloroplastic</fullName>
    </alternativeName>
</protein>
<dbReference type="EMBL" id="DQ768221">
    <property type="protein sequence ID" value="ABG76912.1"/>
    <property type="molecule type" value="Genomic_DNA"/>
</dbReference>
<dbReference type="RefSeq" id="YP_009430584.1">
    <property type="nucleotide sequence ID" value="NC_035961.1"/>
</dbReference>
<dbReference type="RefSeq" id="YP_009430604.1">
    <property type="nucleotide sequence ID" value="NC_035961.1"/>
</dbReference>
<dbReference type="SMR" id="Q0PUX7"/>
<dbReference type="GeneID" id="34678125"/>
<dbReference type="GeneID" id="34678172"/>
<dbReference type="GO" id="GO:0009507">
    <property type="term" value="C:chloroplast"/>
    <property type="evidence" value="ECO:0007669"/>
    <property type="project" value="UniProtKB-SubCell"/>
</dbReference>
<dbReference type="GO" id="GO:1990904">
    <property type="term" value="C:ribonucleoprotein complex"/>
    <property type="evidence" value="ECO:0007669"/>
    <property type="project" value="UniProtKB-KW"/>
</dbReference>
<dbReference type="GO" id="GO:0005840">
    <property type="term" value="C:ribosome"/>
    <property type="evidence" value="ECO:0007669"/>
    <property type="project" value="UniProtKB-KW"/>
</dbReference>
<dbReference type="GO" id="GO:0003729">
    <property type="term" value="F:mRNA binding"/>
    <property type="evidence" value="ECO:0007669"/>
    <property type="project" value="UniProtKB-ARBA"/>
</dbReference>
<dbReference type="GO" id="GO:0019843">
    <property type="term" value="F:rRNA binding"/>
    <property type="evidence" value="ECO:0007669"/>
    <property type="project" value="UniProtKB-UniRule"/>
</dbReference>
<dbReference type="GO" id="GO:0003735">
    <property type="term" value="F:structural constituent of ribosome"/>
    <property type="evidence" value="ECO:0007669"/>
    <property type="project" value="InterPro"/>
</dbReference>
<dbReference type="GO" id="GO:0006412">
    <property type="term" value="P:translation"/>
    <property type="evidence" value="ECO:0007669"/>
    <property type="project" value="UniProtKB-UniRule"/>
</dbReference>
<dbReference type="FunFam" id="3.30.70.330:FF:000002">
    <property type="entry name" value="50S ribosomal protein L23, chloroplastic"/>
    <property type="match status" value="1"/>
</dbReference>
<dbReference type="Gene3D" id="3.30.70.330">
    <property type="match status" value="1"/>
</dbReference>
<dbReference type="HAMAP" id="MF_01369_B">
    <property type="entry name" value="Ribosomal_uL23_B"/>
    <property type="match status" value="1"/>
</dbReference>
<dbReference type="InterPro" id="IPR012677">
    <property type="entry name" value="Nucleotide-bd_a/b_plait_sf"/>
</dbReference>
<dbReference type="InterPro" id="IPR013025">
    <property type="entry name" value="Ribosomal_uL23-like"/>
</dbReference>
<dbReference type="InterPro" id="IPR012678">
    <property type="entry name" value="Ribosomal_uL23/eL15/eS24_sf"/>
</dbReference>
<dbReference type="InterPro" id="IPR001014">
    <property type="entry name" value="Ribosomal_uL23_CS"/>
</dbReference>
<dbReference type="PANTHER" id="PTHR11620">
    <property type="entry name" value="60S RIBOSOMAL PROTEIN L23A"/>
    <property type="match status" value="1"/>
</dbReference>
<dbReference type="Pfam" id="PF00276">
    <property type="entry name" value="Ribosomal_L23"/>
    <property type="match status" value="1"/>
</dbReference>
<dbReference type="SUPFAM" id="SSF54189">
    <property type="entry name" value="Ribosomal proteins S24e, L23 and L15e"/>
    <property type="match status" value="1"/>
</dbReference>
<dbReference type="PROSITE" id="PS00050">
    <property type="entry name" value="RIBOSOMAL_L23"/>
    <property type="match status" value="1"/>
</dbReference>
<reference key="1">
    <citation type="journal article" date="2005" name="BMC Genomics">
        <title>ASAP: amplification, sequencing and annotation of plastomes.</title>
        <authorList>
            <person name="Dhingra A."/>
            <person name="Folta K.M."/>
        </authorList>
    </citation>
    <scope>NUCLEOTIDE SEQUENCE [GENOMIC DNA]</scope>
</reference>
<organism>
    <name type="scientific">Fragaria ananassa</name>
    <name type="common">Strawberry</name>
    <name type="synonym">Fragaria chiloensis x Fragaria virginiana</name>
    <dbReference type="NCBI Taxonomy" id="3747"/>
    <lineage>
        <taxon>Eukaryota</taxon>
        <taxon>Viridiplantae</taxon>
        <taxon>Streptophyta</taxon>
        <taxon>Embryophyta</taxon>
        <taxon>Tracheophyta</taxon>
        <taxon>Spermatophyta</taxon>
        <taxon>Magnoliopsida</taxon>
        <taxon>eudicotyledons</taxon>
        <taxon>Gunneridae</taxon>
        <taxon>Pentapetalae</taxon>
        <taxon>rosids</taxon>
        <taxon>fabids</taxon>
        <taxon>Rosales</taxon>
        <taxon>Rosaceae</taxon>
        <taxon>Rosoideae</taxon>
        <taxon>Potentilleae</taxon>
        <taxon>Fragariinae</taxon>
        <taxon>Fragaria</taxon>
    </lineage>
</organism>
<feature type="chain" id="PRO_0000272899" description="Large ribosomal subunit protein uL23c">
    <location>
        <begin position="1"/>
        <end position="93"/>
    </location>
</feature>
<proteinExistence type="inferred from homology"/>
<evidence type="ECO:0000250" key="1"/>
<evidence type="ECO:0000305" key="2"/>
<keyword id="KW-0150">Chloroplast</keyword>
<keyword id="KW-0934">Plastid</keyword>
<keyword id="KW-0687">Ribonucleoprotein</keyword>
<keyword id="KW-0689">Ribosomal protein</keyword>
<keyword id="KW-0694">RNA-binding</keyword>
<keyword id="KW-0699">rRNA-binding</keyword>
<sequence>MDGIKYAVFTDKSIRLLGKNQYTSNVESGSTRTEIKHWVELFFGVKVIAMNSHRLPGKGRRMGPTMGHTMHYRRMIITLQPGYSIPPLRKKRT</sequence>
<geneLocation type="chloroplast"/>